<organism>
    <name type="scientific">Mannheimia haemolytica</name>
    <name type="common">Pasteurella haemolytica</name>
    <dbReference type="NCBI Taxonomy" id="75985"/>
    <lineage>
        <taxon>Bacteria</taxon>
        <taxon>Pseudomonadati</taxon>
        <taxon>Pseudomonadota</taxon>
        <taxon>Gammaproteobacteria</taxon>
        <taxon>Pasteurellales</taxon>
        <taxon>Pasteurellaceae</taxon>
        <taxon>Mannheimia</taxon>
    </lineage>
</organism>
<keyword id="KW-0106">Calcium</keyword>
<keyword id="KW-0204">Cytolysis</keyword>
<keyword id="KW-0354">Hemolysis</keyword>
<keyword id="KW-1032">Host cell membrane</keyword>
<keyword id="KW-1043">Host membrane</keyword>
<keyword id="KW-0449">Lipoprotein</keyword>
<keyword id="KW-0472">Membrane</keyword>
<keyword id="KW-0677">Repeat</keyword>
<keyword id="KW-0964">Secreted</keyword>
<keyword id="KW-0800">Toxin</keyword>
<keyword id="KW-0812">Transmembrane</keyword>
<keyword id="KW-1133">Transmembrane helix</keyword>
<keyword id="KW-0843">Virulence</keyword>
<evidence type="ECO:0000250" key="1"/>
<evidence type="ECO:0000255" key="2"/>
<evidence type="ECO:0000305" key="3"/>
<accession>Q9EV34</accession>
<protein>
    <recommendedName>
        <fullName>Leukotoxin</fullName>
        <shortName>Lkt</shortName>
    </recommendedName>
</protein>
<name>LKTA8_MANHA</name>
<proteinExistence type="inferred from homology"/>
<comment type="function">
    <text evidence="1">Pasteurella leukotoxins are exotoxins that attack host leukocytes and especially polymorphonuclear cells, by causing cell rupture. The leukotoxin binds to the host LFA-1 integrin and induces a signaling cascade leading to many biological effects, including tyrosine phosphorylation of the CD18 tail, elevation of the intracellular Ca(2+) and lysis of the host cell (By similarity). This leukotoxin is a major contributor to the pathogenesis of lung injury in ovine pneumonic pasteurellosis. It also has weak hemolytic activity.</text>
</comment>
<comment type="subcellular location">
    <subcellularLocation>
        <location evidence="1">Secreted</location>
    </subcellularLocation>
    <subcellularLocation>
        <location evidence="1">Host cell membrane</location>
        <topology evidence="1">Multi-pass membrane protein</topology>
    </subcellularLocation>
</comment>
<comment type="domain">
    <text evidence="1">The transmembrane domains are believed to be involved in pore formation in target cells.</text>
</comment>
<comment type="domain">
    <text evidence="1">The Gly-rich region is probably involved in calcium binding, which is required for target cell-binding and cytolytic activity.</text>
</comment>
<comment type="domain">
    <text evidence="1">The C-terminal domain contains an export signal that is recognized by the ABC transporter complex LktBD.</text>
</comment>
<comment type="PTM">
    <text evidence="1">Acylated by LktC. The toxin only becomes active when modified (By similarity).</text>
</comment>
<comment type="miscellaneous">
    <text>The lktCABD operon has a complex mosaic structure that has been derived by extensive inter- and intraspecies horizontal DNA transfer and intragenic recombination events.</text>
</comment>
<comment type="similarity">
    <text evidence="3">Belongs to the RTX prokaryotic toxin (TC 1.C.11) family.</text>
</comment>
<dbReference type="EMBL" id="AF314505">
    <property type="protein sequence ID" value="AAG40289.1"/>
    <property type="molecule type" value="Genomic_DNA"/>
</dbReference>
<dbReference type="RefSeq" id="WP_249763748.1">
    <property type="nucleotide sequence ID" value="NZ_CP097336.1"/>
</dbReference>
<dbReference type="SMR" id="Q9EV34"/>
<dbReference type="GO" id="GO:0005576">
    <property type="term" value="C:extracellular region"/>
    <property type="evidence" value="ECO:0007669"/>
    <property type="project" value="UniProtKB-SubCell"/>
</dbReference>
<dbReference type="GO" id="GO:0020002">
    <property type="term" value="C:host cell plasma membrane"/>
    <property type="evidence" value="ECO:0007669"/>
    <property type="project" value="UniProtKB-SubCell"/>
</dbReference>
<dbReference type="GO" id="GO:0016020">
    <property type="term" value="C:membrane"/>
    <property type="evidence" value="ECO:0007669"/>
    <property type="project" value="UniProtKB-KW"/>
</dbReference>
<dbReference type="GO" id="GO:0005509">
    <property type="term" value="F:calcium ion binding"/>
    <property type="evidence" value="ECO:0007669"/>
    <property type="project" value="InterPro"/>
</dbReference>
<dbReference type="GO" id="GO:0015267">
    <property type="term" value="F:channel activity"/>
    <property type="evidence" value="ECO:0007669"/>
    <property type="project" value="InterPro"/>
</dbReference>
<dbReference type="GO" id="GO:0090729">
    <property type="term" value="F:toxin activity"/>
    <property type="evidence" value="ECO:0007669"/>
    <property type="project" value="UniProtKB-KW"/>
</dbReference>
<dbReference type="GO" id="GO:0031640">
    <property type="term" value="P:killing of cells of another organism"/>
    <property type="evidence" value="ECO:0007669"/>
    <property type="project" value="UniProtKB-KW"/>
</dbReference>
<dbReference type="FunFam" id="2.150.10.10:FF:000002">
    <property type="entry name" value="Leukotoxin"/>
    <property type="match status" value="1"/>
</dbReference>
<dbReference type="Gene3D" id="2.150.10.10">
    <property type="entry name" value="Serralysin-like metalloprotease, C-terminal"/>
    <property type="match status" value="1"/>
</dbReference>
<dbReference type="InterPro" id="IPR018511">
    <property type="entry name" value="Hemolysin-typ_Ca-bd_CS"/>
</dbReference>
<dbReference type="InterPro" id="IPR001343">
    <property type="entry name" value="Hemolysn_Ca-bd"/>
</dbReference>
<dbReference type="InterPro" id="IPR013550">
    <property type="entry name" value="RTX_C"/>
</dbReference>
<dbReference type="InterPro" id="IPR018504">
    <property type="entry name" value="RTX_pore_form"/>
</dbReference>
<dbReference type="InterPro" id="IPR050557">
    <property type="entry name" value="RTX_toxin/Mannuronan_C5-epim"/>
</dbReference>
<dbReference type="InterPro" id="IPR003995">
    <property type="entry name" value="RTX_toxin_determinant-A"/>
</dbReference>
<dbReference type="InterPro" id="IPR011049">
    <property type="entry name" value="Serralysin-like_metalloprot_C"/>
</dbReference>
<dbReference type="NCBIfam" id="NF033943">
    <property type="entry name" value="RTX_toxin"/>
    <property type="match status" value="1"/>
</dbReference>
<dbReference type="PANTHER" id="PTHR38340">
    <property type="entry name" value="S-LAYER PROTEIN"/>
    <property type="match status" value="1"/>
</dbReference>
<dbReference type="PANTHER" id="PTHR38340:SF1">
    <property type="entry name" value="S-LAYER PROTEIN"/>
    <property type="match status" value="1"/>
</dbReference>
<dbReference type="Pfam" id="PF00353">
    <property type="entry name" value="HemolysinCabind"/>
    <property type="match status" value="3"/>
</dbReference>
<dbReference type="Pfam" id="PF02382">
    <property type="entry name" value="RTX"/>
    <property type="match status" value="1"/>
</dbReference>
<dbReference type="Pfam" id="PF08339">
    <property type="entry name" value="RTX_C"/>
    <property type="match status" value="1"/>
</dbReference>
<dbReference type="PRINTS" id="PR00313">
    <property type="entry name" value="CABNDNGRPT"/>
</dbReference>
<dbReference type="PRINTS" id="PR01488">
    <property type="entry name" value="RTXTOXINA"/>
</dbReference>
<dbReference type="SUPFAM" id="SSF51120">
    <property type="entry name" value="beta-Roll"/>
    <property type="match status" value="1"/>
</dbReference>
<dbReference type="PROSITE" id="PS00330">
    <property type="entry name" value="HEMOLYSIN_CALCIUM"/>
    <property type="match status" value="4"/>
</dbReference>
<feature type="chain" id="PRO_0000196229" description="Leukotoxin">
    <location>
        <begin position="1"/>
        <end position="953"/>
    </location>
</feature>
<feature type="transmembrane region" description="Helical" evidence="2">
    <location>
        <begin position="229"/>
        <end position="249"/>
    </location>
</feature>
<feature type="transmembrane region" description="Helical" evidence="2">
    <location>
        <begin position="297"/>
        <end position="317"/>
    </location>
</feature>
<feature type="transmembrane region" description="Helical" evidence="2">
    <location>
        <begin position="359"/>
        <end position="379"/>
    </location>
</feature>
<feature type="transmembrane region" description="Helical" evidence="2">
    <location>
        <begin position="381"/>
        <end position="401"/>
    </location>
</feature>
<feature type="repeat" description="Hemolysin-type calcium-binding 1">
    <location>
        <begin position="715"/>
        <end position="732"/>
    </location>
</feature>
<feature type="repeat" description="Hemolysin-type calcium-binding 2">
    <location>
        <begin position="733"/>
        <end position="750"/>
    </location>
</feature>
<feature type="repeat" description="Hemolysin-type calcium-binding 3">
    <location>
        <begin position="751"/>
        <end position="768"/>
    </location>
</feature>
<feature type="repeat" description="Hemolysin-type calcium-binding 4">
    <location>
        <begin position="769"/>
        <end position="786"/>
    </location>
</feature>
<feature type="repeat" description="Hemolysin-type calcium-binding 5">
    <location>
        <begin position="789"/>
        <end position="806"/>
    </location>
</feature>
<sequence>MGTRLTTLSNGLKNTLTATKSGLHKAGQSLTQAGSSLKTGAKKIILYIPQNYQYDTEQGNGLQDLVKAAEELGIEVQREERNNIATAQTSLGTIQTAIGLTERGIVLSAPQIDKLLQKTKAGQALGSAESIVQNANKAKTVLSGIQSILGSVLAGMDLDEALQNNSNQHALAKAGLELTNSLIENIANSVKTLDEFGEQISQFGSKLQNIKGLGTLGDKLKNIGGLDKAGLGLDVISGLLSGATAALVLADKNASTAKKVGAGFELANQVVGNITKAVSSYILAQRVAAGLSSTGPVAALIASTVSLAISPLAFAGIADKFNHAKSLESYAERFKKLGYDGDNLLAEYQRGTGTIDASVTAINTALAAIAGGVSAAAAGSVIASPIALLVSGITGVISTILQYSKQAMFEHVANKIHNKIVEWEKNNHGKNYFENGYDARYLANLQDNMKFLLNLNKELQAERVIAITQQQWDNNIGDLAGISRLGEKVLSGKAYVDAFEEGKHIKADKLVQLDSANGIIDVSNSGKAKTQHILFRTPLLTPGTEHRERVQTGKYEYITKLNINRVDSWKITDGAASSTFDLTNVVQRIGIELDNAGNVTKTKETKIIAKLGEGDDNVFVGSGTTEIDGGEGYDRVHYSRGNYGALTIDATKEIEQGSYTVNRFVETGKALHEVTSTHTALVGNREEKIEYRHSNNQHHAGYYTKDTLKAVEEIIGTSHNDIFKGSKFNDAFNGGDGVDTIDGNDGNDRLFGGKGDDILDGGNGDDFIDGGKGNDLLHGGKGDDIFVHRKGDGNDIITDSDGNDKLSFSDSNLKDLTFEKVKHNLVITNSKKEKVTIQDWFREADFAKEVPNYKATKDEKIEEIIGQNGERITSKQVDDLIAKGNGKITQDELSKVVDNYELLKHSKNVTNSLDKLISSVSAFTSSNDSRNVLVAPTSMLDQSLSSLQFARAA</sequence>
<gene>
    <name type="primary">lktA</name>
</gene>
<reference key="1">
    <citation type="journal article" date="2001" name="J. Bacteriol.">
        <title>Sequence diversity and molecular evolution of the leukotoxin (lktA) gene in bovine and ovine strains of Mannheimia (Pasteurella) haemolytica.</title>
        <authorList>
            <person name="Davies R.L."/>
            <person name="Whittam T.S."/>
            <person name="Selander R.K."/>
        </authorList>
    </citation>
    <scope>NUCLEOTIDE SEQUENCE [GENOMIC DNA]</scope>
    <source>
        <strain>Serotype A8 / PH56</strain>
    </source>
</reference>